<name>PSAB_NICTO</name>
<keyword id="KW-0004">4Fe-4S</keyword>
<keyword id="KW-0148">Chlorophyll</keyword>
<keyword id="KW-0150">Chloroplast</keyword>
<keyword id="KW-0157">Chromophore</keyword>
<keyword id="KW-0249">Electron transport</keyword>
<keyword id="KW-0408">Iron</keyword>
<keyword id="KW-0411">Iron-sulfur</keyword>
<keyword id="KW-0460">Magnesium</keyword>
<keyword id="KW-0472">Membrane</keyword>
<keyword id="KW-0479">Metal-binding</keyword>
<keyword id="KW-0560">Oxidoreductase</keyword>
<keyword id="KW-0602">Photosynthesis</keyword>
<keyword id="KW-0603">Photosystem I</keyword>
<keyword id="KW-0934">Plastid</keyword>
<keyword id="KW-0793">Thylakoid</keyword>
<keyword id="KW-0812">Transmembrane</keyword>
<keyword id="KW-1133">Transmembrane helix</keyword>
<keyword id="KW-0813">Transport</keyword>
<gene>
    <name evidence="1" type="primary">psaB</name>
</gene>
<feature type="chain" id="PRO_0000277123" description="Photosystem I P700 chlorophyll a apoprotein A2">
    <location>
        <begin position="1"/>
        <end position="734"/>
    </location>
</feature>
<feature type="transmembrane region" description="Helical; Name=I" evidence="1">
    <location>
        <begin position="46"/>
        <end position="69"/>
    </location>
</feature>
<feature type="transmembrane region" description="Helical; Name=II" evidence="1">
    <location>
        <begin position="135"/>
        <end position="158"/>
    </location>
</feature>
<feature type="transmembrane region" description="Helical; Name=III" evidence="1">
    <location>
        <begin position="175"/>
        <end position="199"/>
    </location>
</feature>
<feature type="transmembrane region" description="Helical; Name=IV" evidence="1">
    <location>
        <begin position="273"/>
        <end position="291"/>
    </location>
</feature>
<feature type="transmembrane region" description="Helical; Name=V" evidence="1">
    <location>
        <begin position="330"/>
        <end position="353"/>
    </location>
</feature>
<feature type="transmembrane region" description="Helical; Name=VI" evidence="1">
    <location>
        <begin position="369"/>
        <end position="395"/>
    </location>
</feature>
<feature type="transmembrane region" description="Helical; Name=VII" evidence="1">
    <location>
        <begin position="417"/>
        <end position="439"/>
    </location>
</feature>
<feature type="transmembrane region" description="Helical; Name=VIII" evidence="1">
    <location>
        <begin position="517"/>
        <end position="535"/>
    </location>
</feature>
<feature type="transmembrane region" description="Helical; Name=IX" evidence="1">
    <location>
        <begin position="575"/>
        <end position="596"/>
    </location>
</feature>
<feature type="transmembrane region" description="Helical; Name=X" evidence="1">
    <location>
        <begin position="643"/>
        <end position="665"/>
    </location>
</feature>
<feature type="transmembrane region" description="Helical; Name=XI" evidence="1">
    <location>
        <begin position="707"/>
        <end position="727"/>
    </location>
</feature>
<feature type="binding site" evidence="1">
    <location>
        <position position="559"/>
    </location>
    <ligand>
        <name>[4Fe-4S] cluster</name>
        <dbReference type="ChEBI" id="CHEBI:49883"/>
        <note>ligand shared between dimeric partners</note>
    </ligand>
</feature>
<feature type="binding site" evidence="1">
    <location>
        <position position="568"/>
    </location>
    <ligand>
        <name>[4Fe-4S] cluster</name>
        <dbReference type="ChEBI" id="CHEBI:49883"/>
        <note>ligand shared between dimeric partners</note>
    </ligand>
</feature>
<feature type="binding site" description="axial binding residue" evidence="1">
    <location>
        <position position="654"/>
    </location>
    <ligand>
        <name>chlorophyll a</name>
        <dbReference type="ChEBI" id="CHEBI:58416"/>
        <label>B1</label>
    </ligand>
    <ligandPart>
        <name>Mg</name>
        <dbReference type="ChEBI" id="CHEBI:25107"/>
    </ligandPart>
</feature>
<feature type="binding site" description="axial binding residue" evidence="1">
    <location>
        <position position="662"/>
    </location>
    <ligand>
        <name>chlorophyll a</name>
        <dbReference type="ChEBI" id="CHEBI:58416"/>
        <label>B3</label>
    </ligand>
    <ligandPart>
        <name>Mg</name>
        <dbReference type="ChEBI" id="CHEBI:25107"/>
    </ligandPart>
</feature>
<feature type="binding site" evidence="1">
    <location>
        <position position="670"/>
    </location>
    <ligand>
        <name>chlorophyll a</name>
        <dbReference type="ChEBI" id="CHEBI:58416"/>
        <label>B3</label>
    </ligand>
</feature>
<feature type="binding site" evidence="1">
    <location>
        <position position="671"/>
    </location>
    <ligand>
        <name>phylloquinone</name>
        <dbReference type="ChEBI" id="CHEBI:18067"/>
        <label>B</label>
    </ligand>
</feature>
<accession>Q33C37</accession>
<proteinExistence type="inferred from homology"/>
<sequence length="734" mass="82464">MALRFPRFSQGLAQDPTTRRIWFGIATAHDFESHDDITEERLYQNIFASHFGQLAIIFLWTSGNLFHVAWQGNFELWVQDPLHVRPIAHAIWDPHFGQPAVEAFTRGGALGPVNIAYSGVYQWWYTIGLRTNEDLYTGALFLLFLSAISLIAGWLHLQPKWKPSVSWFKNAESRLNHHLSGLFGVSSLAWTGHLVHVAIPASRGEYVRWNNFLDVLPHPQGLGPLFTGQWNLYAQNPDSSSHLFGTAQGAGTAILTLLGGFHPQTQSLWLTDIAHHHLAIAFIFLVAGHMYRTNFGIGHSMKDLLDAHIPPGGRLGRGHEGLYDTINNSLHFQLGLALASLGVITSLVAQHMYSLPAYAFIAQDFTTQAALYTHHQYIAGFIMTGAFAHGAIFFIRDYNPEQNEDNVLARMLEHKEAIISHLSWASLFLGFHTLGLYVHNDVMLAFGTPEKQILIEPIFAQWIQSAHGKTSYGFDVLLSSTSGPAFNAGRSIWLPGWLNAVNENSNSLFLTIGPGDFLVHHAIALGLHTTTLILVKGALDARGSKLMPDKKDFGYSFPCDGPGRGGTCDISAWDAFYLAVFWMLNTIGWVTFYWHWKHITLWQGNVSQFNESSTYLMGWLRDYLWLNSSQLINGYNPFGMNSLSVWAWMFLFGHLVWATGFMFLISWRGYWQELIETLAWAHERTPLANLIRWRDKPVALSIVQARLVGLVHFSVGYIFTYAAFLIASTSGKFG</sequence>
<comment type="function">
    <text evidence="1">PsaA and PsaB bind P700, the primary electron donor of photosystem I (PSI), as well as the electron acceptors A0, A1 and FX. PSI is a plastocyanin-ferredoxin oxidoreductase, converting photonic excitation into a charge separation, which transfers an electron from the donor P700 chlorophyll pair to the spectroscopically characterized acceptors A0, A1, FX, FA and FB in turn. Oxidized P700 is reduced on the lumenal side of the thylakoid membrane by plastocyanin.</text>
</comment>
<comment type="catalytic activity">
    <reaction evidence="1">
        <text>reduced [plastocyanin] + hnu + oxidized [2Fe-2S]-[ferredoxin] = oxidized [plastocyanin] + reduced [2Fe-2S]-[ferredoxin]</text>
        <dbReference type="Rhea" id="RHEA:30407"/>
        <dbReference type="Rhea" id="RHEA-COMP:10000"/>
        <dbReference type="Rhea" id="RHEA-COMP:10001"/>
        <dbReference type="Rhea" id="RHEA-COMP:10039"/>
        <dbReference type="Rhea" id="RHEA-COMP:10040"/>
        <dbReference type="ChEBI" id="CHEBI:29036"/>
        <dbReference type="ChEBI" id="CHEBI:30212"/>
        <dbReference type="ChEBI" id="CHEBI:33737"/>
        <dbReference type="ChEBI" id="CHEBI:33738"/>
        <dbReference type="ChEBI" id="CHEBI:49552"/>
        <dbReference type="EC" id="1.97.1.12"/>
    </reaction>
</comment>
<comment type="cofactor">
    <text evidence="1">P700 is a chlorophyll a/chlorophyll a' dimer, A0 is one or more chlorophyll a, A1 is one or both phylloquinones and FX is a shared 4Fe-4S iron-sulfur center.</text>
</comment>
<comment type="subunit">
    <text evidence="1">The PsaA/B heterodimer binds the P700 chlorophyll special pair and subsequent electron acceptors. PSI consists of a core antenna complex that captures photons, and an electron transfer chain that converts photonic excitation into a charge separation. The eukaryotic PSI reaction center is composed of at least 11 subunits.</text>
</comment>
<comment type="subcellular location">
    <subcellularLocation>
        <location>Plastid</location>
        <location>Chloroplast thylakoid membrane</location>
        <topology>Multi-pass membrane protein</topology>
    </subcellularLocation>
</comment>
<comment type="similarity">
    <text evidence="1">Belongs to the PsaA/PsaB family.</text>
</comment>
<dbReference type="EC" id="1.97.1.12" evidence="1"/>
<dbReference type="EMBL" id="AB240139">
    <property type="protein sequence ID" value="BAE47998.1"/>
    <property type="molecule type" value="Genomic_DNA"/>
</dbReference>
<dbReference type="RefSeq" id="YP_398860.1">
    <property type="nucleotide sequence ID" value="NC_007602.1"/>
</dbReference>
<dbReference type="SMR" id="Q33C37"/>
<dbReference type="GeneID" id="3776363"/>
<dbReference type="KEGG" id="nto:3776363"/>
<dbReference type="OrthoDB" id="1699083at2759"/>
<dbReference type="GO" id="GO:0009535">
    <property type="term" value="C:chloroplast thylakoid membrane"/>
    <property type="evidence" value="ECO:0007669"/>
    <property type="project" value="UniProtKB-SubCell"/>
</dbReference>
<dbReference type="GO" id="GO:0009522">
    <property type="term" value="C:photosystem I"/>
    <property type="evidence" value="ECO:0007669"/>
    <property type="project" value="UniProtKB-KW"/>
</dbReference>
<dbReference type="GO" id="GO:0051539">
    <property type="term" value="F:4 iron, 4 sulfur cluster binding"/>
    <property type="evidence" value="ECO:0007669"/>
    <property type="project" value="UniProtKB-KW"/>
</dbReference>
<dbReference type="GO" id="GO:0016168">
    <property type="term" value="F:chlorophyll binding"/>
    <property type="evidence" value="ECO:0007669"/>
    <property type="project" value="UniProtKB-KW"/>
</dbReference>
<dbReference type="GO" id="GO:0009055">
    <property type="term" value="F:electron transfer activity"/>
    <property type="evidence" value="ECO:0007669"/>
    <property type="project" value="UniProtKB-UniRule"/>
</dbReference>
<dbReference type="GO" id="GO:0000287">
    <property type="term" value="F:magnesium ion binding"/>
    <property type="evidence" value="ECO:0007669"/>
    <property type="project" value="UniProtKB-UniRule"/>
</dbReference>
<dbReference type="GO" id="GO:0016491">
    <property type="term" value="F:oxidoreductase activity"/>
    <property type="evidence" value="ECO:0007669"/>
    <property type="project" value="UniProtKB-KW"/>
</dbReference>
<dbReference type="GO" id="GO:0015979">
    <property type="term" value="P:photosynthesis"/>
    <property type="evidence" value="ECO:0007669"/>
    <property type="project" value="UniProtKB-UniRule"/>
</dbReference>
<dbReference type="FunFam" id="1.20.1130.10:FF:000001">
    <property type="entry name" value="Photosystem I P700 chlorophyll a apoprotein A2"/>
    <property type="match status" value="1"/>
</dbReference>
<dbReference type="Gene3D" id="1.20.1130.10">
    <property type="entry name" value="Photosystem I PsaA/PsaB"/>
    <property type="match status" value="1"/>
</dbReference>
<dbReference type="HAMAP" id="MF_00482">
    <property type="entry name" value="PSI_PsaB"/>
    <property type="match status" value="1"/>
</dbReference>
<dbReference type="InterPro" id="IPR001280">
    <property type="entry name" value="PSI_PsaA/B"/>
</dbReference>
<dbReference type="InterPro" id="IPR020586">
    <property type="entry name" value="PSI_PsaA/B_CS"/>
</dbReference>
<dbReference type="InterPro" id="IPR036408">
    <property type="entry name" value="PSI_PsaA/B_sf"/>
</dbReference>
<dbReference type="InterPro" id="IPR006244">
    <property type="entry name" value="PSI_PsaB"/>
</dbReference>
<dbReference type="NCBIfam" id="TIGR01336">
    <property type="entry name" value="psaB"/>
    <property type="match status" value="1"/>
</dbReference>
<dbReference type="PANTHER" id="PTHR30128">
    <property type="entry name" value="OUTER MEMBRANE PROTEIN, OMPA-RELATED"/>
    <property type="match status" value="1"/>
</dbReference>
<dbReference type="PANTHER" id="PTHR30128:SF19">
    <property type="entry name" value="PHOTOSYSTEM I P700 CHLOROPHYLL A APOPROTEIN A1-RELATED"/>
    <property type="match status" value="1"/>
</dbReference>
<dbReference type="Pfam" id="PF00223">
    <property type="entry name" value="PsaA_PsaB"/>
    <property type="match status" value="1"/>
</dbReference>
<dbReference type="PIRSF" id="PIRSF002905">
    <property type="entry name" value="PSI_A"/>
    <property type="match status" value="1"/>
</dbReference>
<dbReference type="PRINTS" id="PR00257">
    <property type="entry name" value="PHOTSYSPSAAB"/>
</dbReference>
<dbReference type="SUPFAM" id="SSF81558">
    <property type="entry name" value="Photosystem I subunits PsaA/PsaB"/>
    <property type="match status" value="1"/>
</dbReference>
<dbReference type="PROSITE" id="PS00419">
    <property type="entry name" value="PHOTOSYSTEM_I_PSAAB"/>
    <property type="match status" value="1"/>
</dbReference>
<geneLocation type="chloroplast"/>
<reference key="1">
    <citation type="journal article" date="2006" name="Mol. Genet. Genomics">
        <title>The chloroplast genome of Nicotiana sylvestris and Nicotiana tomentosiformis: complete sequencing confirms that the Nicotiana sylvestris progenitor is the maternal genome donor of Nicotiana tabacum.</title>
        <authorList>
            <person name="Yukawa M."/>
            <person name="Tsudzuki T."/>
            <person name="Sugiura M."/>
        </authorList>
    </citation>
    <scope>NUCLEOTIDE SEQUENCE [LARGE SCALE GENOMIC DNA]</scope>
</reference>
<protein>
    <recommendedName>
        <fullName evidence="1">Photosystem I P700 chlorophyll a apoprotein A2</fullName>
        <ecNumber evidence="1">1.97.1.12</ecNumber>
    </recommendedName>
    <alternativeName>
        <fullName evidence="1">PSI-B</fullName>
    </alternativeName>
    <alternativeName>
        <fullName evidence="1">PsaB</fullName>
    </alternativeName>
</protein>
<organism>
    <name type="scientific">Nicotiana tomentosiformis</name>
    <name type="common">Tobacco</name>
    <dbReference type="NCBI Taxonomy" id="4098"/>
    <lineage>
        <taxon>Eukaryota</taxon>
        <taxon>Viridiplantae</taxon>
        <taxon>Streptophyta</taxon>
        <taxon>Embryophyta</taxon>
        <taxon>Tracheophyta</taxon>
        <taxon>Spermatophyta</taxon>
        <taxon>Magnoliopsida</taxon>
        <taxon>eudicotyledons</taxon>
        <taxon>Gunneridae</taxon>
        <taxon>Pentapetalae</taxon>
        <taxon>asterids</taxon>
        <taxon>lamiids</taxon>
        <taxon>Solanales</taxon>
        <taxon>Solanaceae</taxon>
        <taxon>Nicotianoideae</taxon>
        <taxon>Nicotianeae</taxon>
        <taxon>Nicotiana</taxon>
    </lineage>
</organism>
<evidence type="ECO:0000255" key="1">
    <source>
        <dbReference type="HAMAP-Rule" id="MF_00482"/>
    </source>
</evidence>